<evidence type="ECO:0000250" key="1">
    <source>
        <dbReference type="UniProtKB" id="P19267"/>
    </source>
</evidence>
<evidence type="ECO:0000305" key="2"/>
<evidence type="ECO:0000305" key="3">
    <source>
    </source>
</evidence>
<name>HFOB_METFO</name>
<feature type="chain" id="PRO_0000154986" description="Archaeal histone B">
    <location>
        <begin position="1"/>
        <end position="67"/>
    </location>
</feature>
<feature type="region of interest" description="Interaction with DNA" evidence="1">
    <location>
        <begin position="19"/>
        <end position="21"/>
    </location>
</feature>
<feature type="region of interest" description="Interaction with DNA" evidence="1">
    <location>
        <begin position="53"/>
        <end position="56"/>
    </location>
</feature>
<feature type="site" description="Interaction with DNA" evidence="1">
    <location>
        <position position="13"/>
    </location>
</feature>
<protein>
    <recommendedName>
        <fullName>Archaeal histone B</fullName>
    </recommendedName>
</protein>
<gene>
    <name type="primary">hfoB</name>
</gene>
<accession>P48784</accession>
<dbReference type="EMBL" id="U12929">
    <property type="protein sequence ID" value="AAA67720.1"/>
    <property type="molecule type" value="Genomic_DNA"/>
</dbReference>
<dbReference type="RefSeq" id="WP_004031090.1">
    <property type="nucleotide sequence ID" value="NZ_LN734822.1"/>
</dbReference>
<dbReference type="SMR" id="P48784"/>
<dbReference type="STRING" id="2162.BRM9_0598"/>
<dbReference type="GeneID" id="82850883"/>
<dbReference type="OrthoDB" id="7514at2157"/>
<dbReference type="GO" id="GO:0005694">
    <property type="term" value="C:chromosome"/>
    <property type="evidence" value="ECO:0007669"/>
    <property type="project" value="UniProtKB-SubCell"/>
</dbReference>
<dbReference type="GO" id="GO:0005737">
    <property type="term" value="C:cytoplasm"/>
    <property type="evidence" value="ECO:0007669"/>
    <property type="project" value="UniProtKB-SubCell"/>
</dbReference>
<dbReference type="GO" id="GO:0003677">
    <property type="term" value="F:DNA binding"/>
    <property type="evidence" value="ECO:0007669"/>
    <property type="project" value="UniProtKB-KW"/>
</dbReference>
<dbReference type="GO" id="GO:0046982">
    <property type="term" value="F:protein heterodimerization activity"/>
    <property type="evidence" value="ECO:0007669"/>
    <property type="project" value="InterPro"/>
</dbReference>
<dbReference type="CDD" id="cd22909">
    <property type="entry name" value="HFD_archaea_histone-like"/>
    <property type="match status" value="1"/>
</dbReference>
<dbReference type="Gene3D" id="1.10.20.10">
    <property type="entry name" value="Histone, subunit A"/>
    <property type="match status" value="1"/>
</dbReference>
<dbReference type="InterPro" id="IPR050947">
    <property type="entry name" value="Archaeal_histone_HMF"/>
</dbReference>
<dbReference type="InterPro" id="IPR003958">
    <property type="entry name" value="CBFA_NFYB_domain"/>
</dbReference>
<dbReference type="InterPro" id="IPR009072">
    <property type="entry name" value="Histone-fold"/>
</dbReference>
<dbReference type="InterPro" id="IPR050004">
    <property type="entry name" value="HmfB-like"/>
</dbReference>
<dbReference type="InterPro" id="IPR004823">
    <property type="entry name" value="TAF_TATA-bd_Histone-like_dom"/>
</dbReference>
<dbReference type="NCBIfam" id="NF043032">
    <property type="entry name" value="archaea_histone"/>
    <property type="match status" value="1"/>
</dbReference>
<dbReference type="PANTHER" id="PTHR47828">
    <property type="entry name" value="ARCHAEAL HISTONE A"/>
    <property type="match status" value="1"/>
</dbReference>
<dbReference type="PANTHER" id="PTHR47828:SF1">
    <property type="entry name" value="ARCHAEAL HISTONE A"/>
    <property type="match status" value="1"/>
</dbReference>
<dbReference type="Pfam" id="PF00808">
    <property type="entry name" value="CBFD_NFYB_HMF"/>
    <property type="match status" value="1"/>
</dbReference>
<dbReference type="SMART" id="SM00803">
    <property type="entry name" value="TAF"/>
    <property type="match status" value="1"/>
</dbReference>
<dbReference type="SUPFAM" id="SSF47113">
    <property type="entry name" value="Histone-fold"/>
    <property type="match status" value="1"/>
</dbReference>
<sequence length="67" mass="7149">MELPIAPIGRIIKNAGAERVSDDAREALAKALEEKGETIATEAVKLAKHAGRKTVKASDVELAVKRL</sequence>
<comment type="function">
    <text evidence="3">Binds and compact DNA (95 to 150 base pairs) to form nucleosome-like structures that contain positive DNA supercoils. Increases the resistance of DNA to thermal denaturation (in vitro).</text>
</comment>
<comment type="subunit">
    <text evidence="1 3">Homodimer or heterodimer with another histone (PubMed:7836329). Dimers then assemble into higher oligomers, with the DNA wrapped around the protein core (By similarity).</text>
</comment>
<comment type="subcellular location">
    <subcellularLocation>
        <location evidence="2">Cytoplasm</location>
    </subcellularLocation>
    <subcellularLocation>
        <location evidence="2">Chromosome</location>
    </subcellularLocation>
</comment>
<comment type="similarity">
    <text evidence="2">Belongs to the archaeal histone HMF family.</text>
</comment>
<keyword id="KW-0158">Chromosome</keyword>
<keyword id="KW-0963">Cytoplasm</keyword>
<keyword id="KW-0238">DNA-binding</keyword>
<reference key="1">
    <citation type="journal article" date="1995" name="J. Bacteriol.">
        <title>Methanobacterium formicicum, a mesophilic methanogen, contains three HFo histones.</title>
        <authorList>
            <person name="Darcy T.J."/>
            <person name="Sandman K.M."/>
            <person name="Reeve J.N."/>
        </authorList>
    </citation>
    <scope>NUCLEOTIDE SEQUENCE [GENOMIC DNA]</scope>
    <scope>FUNCTION</scope>
    <scope>SUBUNIT</scope>
    <source>
        <strain>JF-1</strain>
    </source>
</reference>
<proteinExistence type="evidence at protein level"/>
<organism>
    <name type="scientific">Methanobacterium formicicum</name>
    <dbReference type="NCBI Taxonomy" id="2162"/>
    <lineage>
        <taxon>Archaea</taxon>
        <taxon>Methanobacteriati</taxon>
        <taxon>Methanobacteriota</taxon>
        <taxon>Methanomada group</taxon>
        <taxon>Methanobacteria</taxon>
        <taxon>Methanobacteriales</taxon>
        <taxon>Methanobacteriaceae</taxon>
        <taxon>Methanobacterium</taxon>
    </lineage>
</organism>